<evidence type="ECO:0000255" key="1">
    <source>
        <dbReference type="HAMAP-Rule" id="MF_01114"/>
    </source>
</evidence>
<keyword id="KW-0963">Cytoplasm</keyword>
<gene>
    <name evidence="1" type="primary">recX</name>
    <name type="ordered locus">SCH_2761</name>
</gene>
<organism>
    <name type="scientific">Salmonella choleraesuis (strain SC-B67)</name>
    <dbReference type="NCBI Taxonomy" id="321314"/>
    <lineage>
        <taxon>Bacteria</taxon>
        <taxon>Pseudomonadati</taxon>
        <taxon>Pseudomonadota</taxon>
        <taxon>Gammaproteobacteria</taxon>
        <taxon>Enterobacterales</taxon>
        <taxon>Enterobacteriaceae</taxon>
        <taxon>Salmonella</taxon>
    </lineage>
</organism>
<proteinExistence type="inferred from homology"/>
<feature type="chain" id="PRO_1000065200" description="Regulatory protein RecX">
    <location>
        <begin position="1"/>
        <end position="166"/>
    </location>
</feature>
<accession>Q57KU5</accession>
<name>RECX_SALCH</name>
<protein>
    <recommendedName>
        <fullName evidence="1">Regulatory protein RecX</fullName>
    </recommendedName>
</protein>
<sequence>MSEPTSRRPAYARLLDRAVRILAVRDHSEQELRRKLSAPVMGKNGPEEIDATADDYERVIAWCHEHHYLDDERFVMRFIASRSRKGYGPARICQELNQKGISRESTEKAMRECEIDWSEMAHEQAVRKYGEPLPSNFSEKVKVQRFLLYRGYLMDDIQQIWRNFAD</sequence>
<comment type="function">
    <text evidence="1">Modulates RecA activity.</text>
</comment>
<comment type="subcellular location">
    <subcellularLocation>
        <location evidence="1">Cytoplasm</location>
    </subcellularLocation>
</comment>
<comment type="similarity">
    <text evidence="1">Belongs to the RecX family.</text>
</comment>
<dbReference type="EMBL" id="AE017220">
    <property type="protein sequence ID" value="AAX66667.1"/>
    <property type="molecule type" value="Genomic_DNA"/>
</dbReference>
<dbReference type="RefSeq" id="WP_001294858.1">
    <property type="nucleotide sequence ID" value="NC_006905.1"/>
</dbReference>
<dbReference type="SMR" id="Q57KU5"/>
<dbReference type="KEGG" id="sec:SCH_2761"/>
<dbReference type="HOGENOM" id="CLU_066607_3_2_6"/>
<dbReference type="Proteomes" id="UP000000538">
    <property type="component" value="Chromosome"/>
</dbReference>
<dbReference type="GO" id="GO:0005737">
    <property type="term" value="C:cytoplasm"/>
    <property type="evidence" value="ECO:0007669"/>
    <property type="project" value="UniProtKB-SubCell"/>
</dbReference>
<dbReference type="GO" id="GO:0006282">
    <property type="term" value="P:regulation of DNA repair"/>
    <property type="evidence" value="ECO:0007669"/>
    <property type="project" value="UniProtKB-UniRule"/>
</dbReference>
<dbReference type="FunFam" id="1.10.10.10:FF:000133">
    <property type="entry name" value="Regulatory protein RecX"/>
    <property type="match status" value="1"/>
</dbReference>
<dbReference type="FunFam" id="1.10.10.10:FF:000134">
    <property type="entry name" value="Regulatory protein RecX"/>
    <property type="match status" value="1"/>
</dbReference>
<dbReference type="Gene3D" id="1.10.10.10">
    <property type="entry name" value="Winged helix-like DNA-binding domain superfamily/Winged helix DNA-binding domain"/>
    <property type="match status" value="3"/>
</dbReference>
<dbReference type="HAMAP" id="MF_01114">
    <property type="entry name" value="RecX"/>
    <property type="match status" value="1"/>
</dbReference>
<dbReference type="InterPro" id="IPR053926">
    <property type="entry name" value="RecX_HTH_1st"/>
</dbReference>
<dbReference type="InterPro" id="IPR053924">
    <property type="entry name" value="RecX_HTH_2nd"/>
</dbReference>
<dbReference type="InterPro" id="IPR053925">
    <property type="entry name" value="RecX_HTH_3rd"/>
</dbReference>
<dbReference type="InterPro" id="IPR003783">
    <property type="entry name" value="Regulatory_RecX"/>
</dbReference>
<dbReference type="InterPro" id="IPR036388">
    <property type="entry name" value="WH-like_DNA-bd_sf"/>
</dbReference>
<dbReference type="NCBIfam" id="NF001052">
    <property type="entry name" value="PRK00117.1-1"/>
    <property type="match status" value="1"/>
</dbReference>
<dbReference type="PANTHER" id="PTHR33602">
    <property type="entry name" value="REGULATORY PROTEIN RECX FAMILY PROTEIN"/>
    <property type="match status" value="1"/>
</dbReference>
<dbReference type="PANTHER" id="PTHR33602:SF1">
    <property type="entry name" value="REGULATORY PROTEIN RECX FAMILY PROTEIN"/>
    <property type="match status" value="1"/>
</dbReference>
<dbReference type="Pfam" id="PF21982">
    <property type="entry name" value="RecX_HTH1"/>
    <property type="match status" value="1"/>
</dbReference>
<dbReference type="Pfam" id="PF02631">
    <property type="entry name" value="RecX_HTH2"/>
    <property type="match status" value="1"/>
</dbReference>
<dbReference type="Pfam" id="PF21981">
    <property type="entry name" value="RecX_HTH3"/>
    <property type="match status" value="1"/>
</dbReference>
<reference key="1">
    <citation type="journal article" date="2005" name="Nucleic Acids Res.">
        <title>The genome sequence of Salmonella enterica serovar Choleraesuis, a highly invasive and resistant zoonotic pathogen.</title>
        <authorList>
            <person name="Chiu C.-H."/>
            <person name="Tang P."/>
            <person name="Chu C."/>
            <person name="Hu S."/>
            <person name="Bao Q."/>
            <person name="Yu J."/>
            <person name="Chou Y.-Y."/>
            <person name="Wang H.-S."/>
            <person name="Lee Y.-S."/>
        </authorList>
    </citation>
    <scope>NUCLEOTIDE SEQUENCE [LARGE SCALE GENOMIC DNA]</scope>
    <source>
        <strain>SC-B67</strain>
    </source>
</reference>